<feature type="chain" id="PRO_1000026236" description="Nucleoside diphosphate kinase">
    <location>
        <begin position="1"/>
        <end position="140"/>
    </location>
</feature>
<feature type="active site" description="Pros-phosphohistidine intermediate" evidence="1">
    <location>
        <position position="117"/>
    </location>
</feature>
<feature type="binding site" evidence="1">
    <location>
        <position position="11"/>
    </location>
    <ligand>
        <name>ATP</name>
        <dbReference type="ChEBI" id="CHEBI:30616"/>
    </ligand>
</feature>
<feature type="binding site" evidence="1">
    <location>
        <position position="59"/>
    </location>
    <ligand>
        <name>ATP</name>
        <dbReference type="ChEBI" id="CHEBI:30616"/>
    </ligand>
</feature>
<feature type="binding site" evidence="1">
    <location>
        <position position="87"/>
    </location>
    <ligand>
        <name>ATP</name>
        <dbReference type="ChEBI" id="CHEBI:30616"/>
    </ligand>
</feature>
<feature type="binding site" evidence="1">
    <location>
        <position position="93"/>
    </location>
    <ligand>
        <name>ATP</name>
        <dbReference type="ChEBI" id="CHEBI:30616"/>
    </ligand>
</feature>
<feature type="binding site" evidence="1">
    <location>
        <position position="104"/>
    </location>
    <ligand>
        <name>ATP</name>
        <dbReference type="ChEBI" id="CHEBI:30616"/>
    </ligand>
</feature>
<feature type="binding site" evidence="1">
    <location>
        <position position="114"/>
    </location>
    <ligand>
        <name>ATP</name>
        <dbReference type="ChEBI" id="CHEBI:30616"/>
    </ligand>
</feature>
<evidence type="ECO:0000255" key="1">
    <source>
        <dbReference type="HAMAP-Rule" id="MF_00451"/>
    </source>
</evidence>
<name>NDK_FRATN</name>
<proteinExistence type="inferred from homology"/>
<dbReference type="EC" id="2.7.4.6" evidence="1"/>
<dbReference type="EMBL" id="CP000439">
    <property type="protein sequence ID" value="ABK89179.1"/>
    <property type="molecule type" value="Genomic_DNA"/>
</dbReference>
<dbReference type="RefSeq" id="WP_003016495.1">
    <property type="nucleotide sequence ID" value="NZ_CP009633.1"/>
</dbReference>
<dbReference type="SMR" id="A0Q4L4"/>
<dbReference type="GeneID" id="75264230"/>
<dbReference type="KEGG" id="ftn:FTN_0271"/>
<dbReference type="KEGG" id="ftx:AW25_1772"/>
<dbReference type="BioCyc" id="FTUL401614:G1G75-282-MONOMER"/>
<dbReference type="Proteomes" id="UP000000762">
    <property type="component" value="Chromosome"/>
</dbReference>
<dbReference type="GO" id="GO:0005737">
    <property type="term" value="C:cytoplasm"/>
    <property type="evidence" value="ECO:0007669"/>
    <property type="project" value="UniProtKB-SubCell"/>
</dbReference>
<dbReference type="GO" id="GO:0005524">
    <property type="term" value="F:ATP binding"/>
    <property type="evidence" value="ECO:0007669"/>
    <property type="project" value="UniProtKB-UniRule"/>
</dbReference>
<dbReference type="GO" id="GO:0046872">
    <property type="term" value="F:metal ion binding"/>
    <property type="evidence" value="ECO:0007669"/>
    <property type="project" value="UniProtKB-KW"/>
</dbReference>
<dbReference type="GO" id="GO:0004550">
    <property type="term" value="F:nucleoside diphosphate kinase activity"/>
    <property type="evidence" value="ECO:0007669"/>
    <property type="project" value="UniProtKB-UniRule"/>
</dbReference>
<dbReference type="GO" id="GO:0006241">
    <property type="term" value="P:CTP biosynthetic process"/>
    <property type="evidence" value="ECO:0007669"/>
    <property type="project" value="UniProtKB-UniRule"/>
</dbReference>
<dbReference type="GO" id="GO:0006183">
    <property type="term" value="P:GTP biosynthetic process"/>
    <property type="evidence" value="ECO:0007669"/>
    <property type="project" value="UniProtKB-UniRule"/>
</dbReference>
<dbReference type="GO" id="GO:0006228">
    <property type="term" value="P:UTP biosynthetic process"/>
    <property type="evidence" value="ECO:0007669"/>
    <property type="project" value="UniProtKB-UniRule"/>
</dbReference>
<dbReference type="CDD" id="cd04413">
    <property type="entry name" value="NDPk_I"/>
    <property type="match status" value="1"/>
</dbReference>
<dbReference type="FunFam" id="3.30.70.141:FF:000001">
    <property type="entry name" value="Nucleoside diphosphate kinase"/>
    <property type="match status" value="1"/>
</dbReference>
<dbReference type="Gene3D" id="3.30.70.141">
    <property type="entry name" value="Nucleoside diphosphate kinase-like domain"/>
    <property type="match status" value="1"/>
</dbReference>
<dbReference type="HAMAP" id="MF_00451">
    <property type="entry name" value="NDP_kinase"/>
    <property type="match status" value="1"/>
</dbReference>
<dbReference type="InterPro" id="IPR034907">
    <property type="entry name" value="NDK-like_dom"/>
</dbReference>
<dbReference type="InterPro" id="IPR036850">
    <property type="entry name" value="NDK-like_dom_sf"/>
</dbReference>
<dbReference type="InterPro" id="IPR001564">
    <property type="entry name" value="Nucleoside_diP_kinase"/>
</dbReference>
<dbReference type="InterPro" id="IPR023005">
    <property type="entry name" value="Nucleoside_diP_kinase_AS"/>
</dbReference>
<dbReference type="NCBIfam" id="NF001908">
    <property type="entry name" value="PRK00668.1"/>
    <property type="match status" value="1"/>
</dbReference>
<dbReference type="PANTHER" id="PTHR46161">
    <property type="entry name" value="NUCLEOSIDE DIPHOSPHATE KINASE"/>
    <property type="match status" value="1"/>
</dbReference>
<dbReference type="PANTHER" id="PTHR46161:SF3">
    <property type="entry name" value="NUCLEOSIDE DIPHOSPHATE KINASE DDB_G0292928-RELATED"/>
    <property type="match status" value="1"/>
</dbReference>
<dbReference type="Pfam" id="PF00334">
    <property type="entry name" value="NDK"/>
    <property type="match status" value="1"/>
</dbReference>
<dbReference type="PRINTS" id="PR01243">
    <property type="entry name" value="NUCDPKINASE"/>
</dbReference>
<dbReference type="SMART" id="SM00562">
    <property type="entry name" value="NDK"/>
    <property type="match status" value="1"/>
</dbReference>
<dbReference type="SUPFAM" id="SSF54919">
    <property type="entry name" value="Nucleoside diphosphate kinase, NDK"/>
    <property type="match status" value="1"/>
</dbReference>
<dbReference type="PROSITE" id="PS00469">
    <property type="entry name" value="NDPK"/>
    <property type="match status" value="1"/>
</dbReference>
<dbReference type="PROSITE" id="PS51374">
    <property type="entry name" value="NDPK_LIKE"/>
    <property type="match status" value="1"/>
</dbReference>
<organism>
    <name type="scientific">Francisella tularensis subsp. novicida (strain U112)</name>
    <dbReference type="NCBI Taxonomy" id="401614"/>
    <lineage>
        <taxon>Bacteria</taxon>
        <taxon>Pseudomonadati</taxon>
        <taxon>Pseudomonadota</taxon>
        <taxon>Gammaproteobacteria</taxon>
        <taxon>Thiotrichales</taxon>
        <taxon>Francisellaceae</taxon>
        <taxon>Francisella</taxon>
    </lineage>
</organism>
<gene>
    <name evidence="1" type="primary">ndk</name>
    <name type="ordered locus">FTN_0271</name>
</gene>
<keyword id="KW-0067">ATP-binding</keyword>
<keyword id="KW-0963">Cytoplasm</keyword>
<keyword id="KW-0418">Kinase</keyword>
<keyword id="KW-0460">Magnesium</keyword>
<keyword id="KW-0479">Metal-binding</keyword>
<keyword id="KW-0546">Nucleotide metabolism</keyword>
<keyword id="KW-0547">Nucleotide-binding</keyword>
<keyword id="KW-0597">Phosphoprotein</keyword>
<keyword id="KW-0808">Transferase</keyword>
<sequence length="140" mass="15428">MTKQRTLSIIKPDAVEKNVIGEIYSRFEKAGLRIIAAKMKHLSKAEAEGFYAVHKDRPFFSALVEFMISGPVMIQVLEGENAIAKNRELMGATNPKEAKAGTIRADFADSIDANAVHGSDAEDTAAQEIRYFFSDTEIFG</sequence>
<comment type="function">
    <text evidence="1">Major role in the synthesis of nucleoside triphosphates other than ATP. The ATP gamma phosphate is transferred to the NDP beta phosphate via a ping-pong mechanism, using a phosphorylated active-site intermediate.</text>
</comment>
<comment type="catalytic activity">
    <reaction evidence="1">
        <text>a 2'-deoxyribonucleoside 5'-diphosphate + ATP = a 2'-deoxyribonucleoside 5'-triphosphate + ADP</text>
        <dbReference type="Rhea" id="RHEA:44640"/>
        <dbReference type="ChEBI" id="CHEBI:30616"/>
        <dbReference type="ChEBI" id="CHEBI:61560"/>
        <dbReference type="ChEBI" id="CHEBI:73316"/>
        <dbReference type="ChEBI" id="CHEBI:456216"/>
        <dbReference type="EC" id="2.7.4.6"/>
    </reaction>
</comment>
<comment type="catalytic activity">
    <reaction evidence="1">
        <text>a ribonucleoside 5'-diphosphate + ATP = a ribonucleoside 5'-triphosphate + ADP</text>
        <dbReference type="Rhea" id="RHEA:18113"/>
        <dbReference type="ChEBI" id="CHEBI:30616"/>
        <dbReference type="ChEBI" id="CHEBI:57930"/>
        <dbReference type="ChEBI" id="CHEBI:61557"/>
        <dbReference type="ChEBI" id="CHEBI:456216"/>
        <dbReference type="EC" id="2.7.4.6"/>
    </reaction>
</comment>
<comment type="cofactor">
    <cofactor evidence="1">
        <name>Mg(2+)</name>
        <dbReference type="ChEBI" id="CHEBI:18420"/>
    </cofactor>
</comment>
<comment type="subunit">
    <text evidence="1">Homotetramer.</text>
</comment>
<comment type="subcellular location">
    <subcellularLocation>
        <location evidence="1">Cytoplasm</location>
    </subcellularLocation>
</comment>
<comment type="similarity">
    <text evidence="1">Belongs to the NDK family.</text>
</comment>
<protein>
    <recommendedName>
        <fullName evidence="1">Nucleoside diphosphate kinase</fullName>
        <shortName evidence="1">NDK</shortName>
        <shortName evidence="1">NDP kinase</shortName>
        <ecNumber evidence="1">2.7.4.6</ecNumber>
    </recommendedName>
    <alternativeName>
        <fullName evidence="1">Nucleoside-2-P kinase</fullName>
    </alternativeName>
</protein>
<reference key="1">
    <citation type="journal article" date="2007" name="Genome Biol.">
        <title>Comparison of Francisella tularensis genomes reveals evolutionary events associated with the emergence of human pathogenic strains.</title>
        <authorList>
            <person name="Rohmer L."/>
            <person name="Fong C."/>
            <person name="Abmayr S."/>
            <person name="Wasnick M."/>
            <person name="Larson Freeman T.J."/>
            <person name="Radey M."/>
            <person name="Guina T."/>
            <person name="Svensson K."/>
            <person name="Hayden H.S."/>
            <person name="Jacobs M."/>
            <person name="Gallagher L.A."/>
            <person name="Manoil C."/>
            <person name="Ernst R.K."/>
            <person name="Drees B."/>
            <person name="Buckley D."/>
            <person name="Haugen E."/>
            <person name="Bovee D."/>
            <person name="Zhou Y."/>
            <person name="Chang J."/>
            <person name="Levy R."/>
            <person name="Lim R."/>
            <person name="Gillett W."/>
            <person name="Guenthener D."/>
            <person name="Kang A."/>
            <person name="Shaffer S.A."/>
            <person name="Taylor G."/>
            <person name="Chen J."/>
            <person name="Gallis B."/>
            <person name="D'Argenio D.A."/>
            <person name="Forsman M."/>
            <person name="Olson M.V."/>
            <person name="Goodlett D.R."/>
            <person name="Kaul R."/>
            <person name="Miller S.I."/>
            <person name="Brittnacher M.J."/>
        </authorList>
    </citation>
    <scope>NUCLEOTIDE SEQUENCE [LARGE SCALE GENOMIC DNA]</scope>
    <source>
        <strain>U112</strain>
    </source>
</reference>
<accession>A0Q4L4</accession>